<proteinExistence type="evidence at protein level"/>
<reference key="1">
    <citation type="journal article" date="1988" name="Mol. Gen. Genet.">
        <title>Nucleotide sequence of the cybB gene encoding cytochrome b561 in Escherichia coli K12.</title>
        <authorList>
            <person name="Nakamura H."/>
            <person name="Murakami H."/>
            <person name="Yamato I."/>
            <person name="Anraku Y."/>
        </authorList>
    </citation>
    <scope>NUCLEOTIDE SEQUENCE [GENOMIC DNA]</scope>
    <source>
        <strain>K12</strain>
    </source>
</reference>
<reference key="2">
    <citation type="journal article" date="1996" name="DNA Res.">
        <title>A 570-kb DNA sequence of the Escherichia coli K-12 genome corresponding to the 28.0-40.1 min region on the linkage map.</title>
        <authorList>
            <person name="Aiba H."/>
            <person name="Baba T."/>
            <person name="Fujita K."/>
            <person name="Hayashi K."/>
            <person name="Inada T."/>
            <person name="Isono K."/>
            <person name="Itoh T."/>
            <person name="Kasai H."/>
            <person name="Kashimoto K."/>
            <person name="Kimura S."/>
            <person name="Kitakawa M."/>
            <person name="Kitagawa M."/>
            <person name="Makino K."/>
            <person name="Miki T."/>
            <person name="Mizobuchi K."/>
            <person name="Mori H."/>
            <person name="Mori T."/>
            <person name="Motomura K."/>
            <person name="Nakade S."/>
            <person name="Nakamura Y."/>
            <person name="Nashimoto H."/>
            <person name="Nishio Y."/>
            <person name="Oshima T."/>
            <person name="Saito N."/>
            <person name="Sampei G."/>
            <person name="Seki Y."/>
            <person name="Sivasundaram S."/>
            <person name="Tagami H."/>
            <person name="Takeda J."/>
            <person name="Takemoto K."/>
            <person name="Takeuchi Y."/>
            <person name="Wada C."/>
            <person name="Yamamoto Y."/>
            <person name="Horiuchi T."/>
        </authorList>
    </citation>
    <scope>NUCLEOTIDE SEQUENCE [LARGE SCALE GENOMIC DNA]</scope>
    <source>
        <strain>K12 / W3110 / ATCC 27325 / DSM 5911</strain>
    </source>
</reference>
<reference key="3">
    <citation type="journal article" date="1997" name="Science">
        <title>The complete genome sequence of Escherichia coli K-12.</title>
        <authorList>
            <person name="Blattner F.R."/>
            <person name="Plunkett G. III"/>
            <person name="Bloch C.A."/>
            <person name="Perna N.T."/>
            <person name="Burland V."/>
            <person name="Riley M."/>
            <person name="Collado-Vides J."/>
            <person name="Glasner J.D."/>
            <person name="Rode C.K."/>
            <person name="Mayhew G.F."/>
            <person name="Gregor J."/>
            <person name="Davis N.W."/>
            <person name="Kirkpatrick H.A."/>
            <person name="Goeden M.A."/>
            <person name="Rose D.J."/>
            <person name="Mau B."/>
            <person name="Shao Y."/>
        </authorList>
    </citation>
    <scope>NUCLEOTIDE SEQUENCE [LARGE SCALE GENOMIC DNA]</scope>
    <source>
        <strain>K12 / MG1655 / ATCC 47076</strain>
    </source>
</reference>
<reference key="4">
    <citation type="journal article" date="2006" name="Mol. Syst. Biol.">
        <title>Highly accurate genome sequences of Escherichia coli K-12 strains MG1655 and W3110.</title>
        <authorList>
            <person name="Hayashi K."/>
            <person name="Morooka N."/>
            <person name="Yamamoto Y."/>
            <person name="Fujita K."/>
            <person name="Isono K."/>
            <person name="Choi S."/>
            <person name="Ohtsubo E."/>
            <person name="Baba T."/>
            <person name="Wanner B.L."/>
            <person name="Mori H."/>
            <person name="Horiuchi T."/>
        </authorList>
    </citation>
    <scope>NUCLEOTIDE SEQUENCE [LARGE SCALE GENOMIC DNA]</scope>
    <scope>SEQUENCE REVISION TO 1-28 AND 165-176</scope>
    <source>
        <strain>K12 / W3110 / ATCC 27325 / DSM 5911</strain>
    </source>
</reference>
<reference key="5">
    <citation type="journal article" date="1984" name="Mol. Gen. Genet.">
        <title>Cloning of cybB, the gene for cytochrome b561 of Escherichia coli K12.</title>
        <authorList>
            <person name="Murakami H."/>
            <person name="Kita K."/>
            <person name="Anraku Y."/>
        </authorList>
    </citation>
    <scope>SUBCELLULAR LOCATION</scope>
    <scope>SPECTRAL PROPERTIES</scope>
    <source>
        <strain>K12</strain>
    </source>
</reference>
<reference key="6">
    <citation type="journal article" date="1986" name="J. Biol. Chem.">
        <title>Purification and properties of a diheme cytochrome b561 of the Escherichia coli respiratory chain.</title>
        <authorList>
            <person name="Murakami H."/>
            <person name="Kita K."/>
            <person name="Anraku Y."/>
        </authorList>
    </citation>
    <scope>FUNCTION</scope>
    <scope>COFACTOR</scope>
    <scope>BIOPHYSICOCHEMICAL PROPERTIES</scope>
    <scope>SUBCELLULAR LOCATION</scope>
    <scope>SPECTRAL PROPERTIES</scope>
    <source>
        <strain>K12</strain>
    </source>
</reference>
<reference key="7">
    <citation type="journal article" date="2005" name="Science">
        <title>Global topology analysis of the Escherichia coli inner membrane proteome.</title>
        <authorList>
            <person name="Daley D.O."/>
            <person name="Rapp M."/>
            <person name="Granseth E."/>
            <person name="Melen K."/>
            <person name="Drew D."/>
            <person name="von Heijne G."/>
        </authorList>
    </citation>
    <scope>TOPOLOGY [LARGE SCALE ANALYSIS]</scope>
    <scope>SUBCELLULAR LOCATION</scope>
    <source>
        <strain>K12 / MG1655 / ATCC 47076</strain>
    </source>
</reference>
<reference key="8">
    <citation type="journal article" date="2022" name="Biochim. Biophys. Acta">
        <title>Functional design of bacterial superoxide:quinone oxidoreductase.</title>
        <authorList>
            <person name="Abou-Hamdan A."/>
            <person name="Mahler R."/>
            <person name="Grossenbacher P."/>
            <person name="Biner O."/>
            <person name="Sjoestrand D."/>
            <person name="Lochner M."/>
            <person name="Hoegbom M."/>
            <person name="von Ballmoos C."/>
        </authorList>
    </citation>
    <scope>FUNCTION</scope>
    <scope>CATALYTIC ACTIVITY</scope>
    <scope>COFACTOR</scope>
    <scope>ACTIVITY REGULATION</scope>
    <scope>BIOPHYSICOCHEMICAL PROPERTIES</scope>
</reference>
<reference evidence="10" key="9">
    <citation type="journal article" date="2018" name="Nat. Chem. Biol.">
        <title>Scavenging of superoxide by a membrane-bound superoxide oxidase.</title>
        <authorList>
            <person name="Lundgren C.A.K."/>
            <person name="Sjostrand D."/>
            <person name="Biner O."/>
            <person name="Bennett M."/>
            <person name="Rudling A."/>
            <person name="Johansson A.L."/>
            <person name="Brzezinski P."/>
            <person name="Carlsson J."/>
            <person name="von Ballmoos C."/>
            <person name="Hogbom M."/>
        </authorList>
    </citation>
    <scope>X-RAY CRYSTALLOGRAPHY (1.97 ANGSTROMS)</scope>
    <scope>FUNCTION</scope>
    <scope>CATALYTIC ACTIVITY</scope>
    <scope>COFACTOR</scope>
    <scope>SUBCELLULAR LOCATION</scope>
    <scope>TOPOLOGY</scope>
    <scope>INDUCTION</scope>
</reference>
<comment type="function">
    <text evidence="2 3 4">B-type di-heme cytochrome (PubMed:29915379, PubMed:3510204, PubMed:35671795). Catalyzes the oxidation of superoxide to molecular oxygen and transfers the extracted electrons to ubiquinone through the two hemes (PubMed:29915379, PubMed:35671795). Can also use menaquinone (PubMed:35671795). The enzyme may be responsible for the detoxification of the superoxide anion produced in the membrane or at its surface (PubMed:29915379). However, it can also efficiently catalyze the formation of superoxide from ubiquinol under physiological conditions (PubMed:35671795).</text>
</comment>
<comment type="catalytic activity">
    <reaction evidence="2 4">
        <text>a ubiquinol + 2 O2 = 2 superoxide + a ubiquinone + 2 H(+)</text>
        <dbReference type="Rhea" id="RHEA:29171"/>
        <dbReference type="Rhea" id="RHEA-COMP:9565"/>
        <dbReference type="Rhea" id="RHEA-COMP:9566"/>
        <dbReference type="ChEBI" id="CHEBI:15378"/>
        <dbReference type="ChEBI" id="CHEBI:15379"/>
        <dbReference type="ChEBI" id="CHEBI:16389"/>
        <dbReference type="ChEBI" id="CHEBI:17976"/>
        <dbReference type="ChEBI" id="CHEBI:18421"/>
        <dbReference type="EC" id="1.10.3.17"/>
    </reaction>
</comment>
<comment type="catalytic activity">
    <reaction evidence="4">
        <text>a menaquinol + 2 O2 = 2 superoxide + a menaquinone + 2 H(+)</text>
        <dbReference type="Rhea" id="RHEA:29179"/>
        <dbReference type="Rhea" id="RHEA-COMP:9537"/>
        <dbReference type="Rhea" id="RHEA-COMP:9539"/>
        <dbReference type="ChEBI" id="CHEBI:15378"/>
        <dbReference type="ChEBI" id="CHEBI:15379"/>
        <dbReference type="ChEBI" id="CHEBI:16374"/>
        <dbReference type="ChEBI" id="CHEBI:18151"/>
        <dbReference type="ChEBI" id="CHEBI:18421"/>
    </reaction>
</comment>
<comment type="cofactor">
    <cofactor evidence="2 3 4">
        <name>heme b</name>
        <dbReference type="ChEBI" id="CHEBI:60344"/>
    </cofactor>
    <text evidence="2 3 4">Binds 2 heme b (iron-protoporphyrin IX) groups per molecule.</text>
</comment>
<comment type="activity regulation">
    <text evidence="4">Quinone binding to the enzyme accelerates the reaction with superoxide.</text>
</comment>
<comment type="biophysicochemical properties">
    <kinetics>
        <KM evidence="4">0.39 uM for ubiquinone</KM>
        <KM evidence="4">10.29 uM for ubiquinol</KM>
    </kinetics>
    <redoxPotential>
        <text evidence="3 4">E(0) is +20 mV (PubMed:3510204). In the absence of ubiquinone, midpoint potentials of -23 mV and +48.5 mV are determined for heme 2 and heme 1, respectively (PubMed:35671795).</text>
    </redoxPotential>
</comment>
<comment type="subunit">
    <text evidence="9">Monomer.</text>
</comment>
<comment type="subcellular location">
    <subcellularLocation>
        <location evidence="1 2 3 5">Cell inner membrane</location>
        <topology evidence="2">Multi-pass membrane protein</topology>
    </subcellularLocation>
</comment>
<comment type="induction">
    <text evidence="2">Expression is 10-20-fold higher in the logarithmic phase than in the stationary phase and this pattern is not influenced by the presence or absence of oxygen.</text>
</comment>
<comment type="miscellaneous">
    <text evidence="3 5">The low-temperature difference spectrum of cytochrome b561 shows an alpha-absorption peak at 561 nm and a minor peak at 555 nm.</text>
</comment>
<comment type="similarity">
    <text evidence="8">Belongs to the cytochrome b561 family.</text>
</comment>
<protein>
    <recommendedName>
        <fullName evidence="6">Superoxide oxidase CybB</fullName>
        <shortName evidence="6">SOO</shortName>
        <ecNumber evidence="2 4">1.10.3.17</ecNumber>
    </recommendedName>
    <alternativeName>
        <fullName>Cytochrome b-561</fullName>
    </alternativeName>
    <alternativeName>
        <fullName evidence="7">Cytochrome b561</fullName>
    </alternativeName>
    <alternativeName>
        <fullName evidence="6">Superoxide:quinone oxidoreductase</fullName>
    </alternativeName>
    <alternativeName>
        <fullName evidence="6">Superoxide:ubiquinone oxidoreductase</fullName>
    </alternativeName>
</protein>
<feature type="chain" id="PRO_0000199971" description="Superoxide oxidase CybB">
    <location>
        <begin position="1"/>
        <end position="176"/>
    </location>
</feature>
<feature type="topological domain" description="Cytoplasmic" evidence="2 10">
    <location>
        <begin position="1"/>
        <end position="7"/>
    </location>
</feature>
<feature type="transmembrane region" description="Helical" evidence="2 10">
    <location>
        <begin position="8"/>
        <end position="29"/>
    </location>
</feature>
<feature type="topological domain" description="Periplasmic" evidence="2 10">
    <location>
        <begin position="30"/>
        <end position="39"/>
    </location>
</feature>
<feature type="transmembrane region" description="Helical" evidence="2 10">
    <location>
        <begin position="40"/>
        <end position="64"/>
    </location>
</feature>
<feature type="topological domain" description="Cytoplasmic" evidence="2 10">
    <location>
        <begin position="65"/>
        <end position="77"/>
    </location>
</feature>
<feature type="transmembrane region" description="Helical" evidence="2 10">
    <location>
        <begin position="78"/>
        <end position="103"/>
    </location>
</feature>
<feature type="topological domain" description="Periplasmic" evidence="2 10">
    <location>
        <begin position="104"/>
        <end position="135"/>
    </location>
</feature>
<feature type="transmembrane region" description="Helical" evidence="2 10">
    <location>
        <begin position="136"/>
        <end position="158"/>
    </location>
</feature>
<feature type="topological domain" description="Cytoplasmic" evidence="1 2 10">
    <location>
        <begin position="159"/>
        <end position="176"/>
    </location>
</feature>
<feature type="binding site" description="axial binding residue" evidence="2 10">
    <location>
        <position position="13"/>
    </location>
    <ligand>
        <name>heme b</name>
        <dbReference type="ChEBI" id="CHEBI:60344"/>
        <label>1</label>
    </ligand>
    <ligandPart>
        <name>Fe</name>
        <dbReference type="ChEBI" id="CHEBI:18248"/>
    </ligandPart>
</feature>
<feature type="binding site" description="axial binding residue" evidence="2 10">
    <location>
        <position position="45"/>
    </location>
    <ligand>
        <name>heme b</name>
        <dbReference type="ChEBI" id="CHEBI:60344"/>
        <label>2</label>
    </ligand>
    <ligandPart>
        <name>Fe</name>
        <dbReference type="ChEBI" id="CHEBI:18248"/>
    </ligandPart>
</feature>
<feature type="binding site" description="axial binding residue" evidence="2 10">
    <location>
        <position position="137"/>
    </location>
    <ligand>
        <name>heme b</name>
        <dbReference type="ChEBI" id="CHEBI:60344"/>
        <label>2</label>
    </ligand>
    <ligandPart>
        <name>Fe</name>
        <dbReference type="ChEBI" id="CHEBI:18248"/>
    </ligandPart>
</feature>
<feature type="binding site" description="axial binding residue" evidence="2 10">
    <location>
        <position position="151"/>
    </location>
    <ligand>
        <name>heme b</name>
        <dbReference type="ChEBI" id="CHEBI:60344"/>
        <label>1</label>
    </ligand>
    <ligandPart>
        <name>Fe</name>
        <dbReference type="ChEBI" id="CHEBI:18248"/>
    </ligandPart>
</feature>
<feature type="sequence conflict" description="In Ref. 1; CAA30454 and 2; no nucleotide entry." evidence="8" ref="1 2">
    <original>MENKYSRLQISIHWLVFLLVIAAYCAME</original>
    <variation>MLWKINIQGYKSAFTGWSFYWLSQRIAQWR</variation>
    <location>
        <begin position="1"/>
        <end position="28"/>
    </location>
</feature>
<feature type="sequence conflict" description="In Ref. 1; CAA30454 and 2; no nucleotide entry." evidence="8" ref="1 2">
    <original>NTLLRMMPRKRS</original>
    <variation>HTSTHDAA</variation>
    <location>
        <begin position="165"/>
        <end position="176"/>
    </location>
</feature>
<feature type="helix" evidence="11">
    <location>
        <begin position="7"/>
        <end position="28"/>
    </location>
</feature>
<feature type="helix" evidence="11">
    <location>
        <begin position="30"/>
        <end position="32"/>
    </location>
</feature>
<feature type="helix" evidence="11">
    <location>
        <begin position="35"/>
        <end position="37"/>
    </location>
</feature>
<feature type="helix" evidence="11">
    <location>
        <begin position="38"/>
        <end position="65"/>
    </location>
</feature>
<feature type="helix" evidence="11">
    <location>
        <begin position="77"/>
        <end position="107"/>
    </location>
</feature>
<feature type="strand" evidence="11">
    <location>
        <begin position="112"/>
        <end position="114"/>
    </location>
</feature>
<feature type="strand" evidence="11">
    <location>
        <begin position="117"/>
        <end position="119"/>
    </location>
</feature>
<feature type="helix" evidence="11">
    <location>
        <begin position="127"/>
        <end position="160"/>
    </location>
</feature>
<feature type="helix" evidence="11">
    <location>
        <begin position="168"/>
        <end position="170"/>
    </location>
</feature>
<feature type="strand" evidence="11">
    <location>
        <begin position="171"/>
        <end position="173"/>
    </location>
</feature>
<dbReference type="EC" id="1.10.3.17" evidence="2 4"/>
<dbReference type="EMBL" id="X07569">
    <property type="protein sequence ID" value="CAA30454.1"/>
    <property type="molecule type" value="Genomic_DNA"/>
</dbReference>
<dbReference type="EMBL" id="U00096">
    <property type="protein sequence ID" value="AAC74500.2"/>
    <property type="molecule type" value="Genomic_DNA"/>
</dbReference>
<dbReference type="EMBL" id="AP009048">
    <property type="protein sequence ID" value="BAA15039.2"/>
    <property type="molecule type" value="Genomic_DNA"/>
</dbReference>
<dbReference type="RefSeq" id="NP_415935.2">
    <property type="nucleotide sequence ID" value="NC_000913.3"/>
</dbReference>
<dbReference type="RefSeq" id="WP_000428998.1">
    <property type="nucleotide sequence ID" value="NZ_SSZK01000021.1"/>
</dbReference>
<dbReference type="PDB" id="5OC0">
    <property type="method" value="X-ray"/>
    <property type="resolution" value="1.97 A"/>
    <property type="chains" value="A=1-176"/>
</dbReference>
<dbReference type="PDBsum" id="5OC0"/>
<dbReference type="SMR" id="P0ABE5"/>
<dbReference type="BioGRID" id="4262882">
    <property type="interactions" value="10"/>
</dbReference>
<dbReference type="FunCoup" id="P0ABE5">
    <property type="interactions" value="2"/>
</dbReference>
<dbReference type="STRING" id="511145.b1418"/>
<dbReference type="jPOST" id="P0ABE5"/>
<dbReference type="PaxDb" id="511145-b1418"/>
<dbReference type="DNASU" id="947241"/>
<dbReference type="EnsemblBacteria" id="AAC74500">
    <property type="protein sequence ID" value="AAC74500"/>
    <property type="gene ID" value="b1418"/>
</dbReference>
<dbReference type="GeneID" id="947241"/>
<dbReference type="KEGG" id="ecj:JW5224"/>
<dbReference type="KEGG" id="eco:b1418"/>
<dbReference type="KEGG" id="ecoc:C3026_08260"/>
<dbReference type="PATRIC" id="fig|1411691.4.peg.852"/>
<dbReference type="EchoBASE" id="EB0169"/>
<dbReference type="eggNOG" id="COG3038">
    <property type="taxonomic scope" value="Bacteria"/>
</dbReference>
<dbReference type="HOGENOM" id="CLU_095321_3_0_6"/>
<dbReference type="InParanoid" id="P0ABE5"/>
<dbReference type="OMA" id="FIKGWHE"/>
<dbReference type="OrthoDB" id="8589936at2"/>
<dbReference type="PhylomeDB" id="P0ABE5"/>
<dbReference type="BioCyc" id="EcoCyc:CYTOCHROME-B561-MONOMER"/>
<dbReference type="BioCyc" id="MetaCyc:CYTOCHROME-B561-MONOMER"/>
<dbReference type="PRO" id="PR:P0ABE5"/>
<dbReference type="Proteomes" id="UP000000625">
    <property type="component" value="Chromosome"/>
</dbReference>
<dbReference type="GO" id="GO:0005886">
    <property type="term" value="C:plasma membrane"/>
    <property type="evidence" value="ECO:0000314"/>
    <property type="project" value="EcoCyc"/>
</dbReference>
<dbReference type="GO" id="GO:0009055">
    <property type="term" value="F:electron transfer activity"/>
    <property type="evidence" value="ECO:0000314"/>
    <property type="project" value="EcoCyc"/>
</dbReference>
<dbReference type="GO" id="GO:0020037">
    <property type="term" value="F:heme binding"/>
    <property type="evidence" value="ECO:0000314"/>
    <property type="project" value="EcoCyc"/>
</dbReference>
<dbReference type="GO" id="GO:0046872">
    <property type="term" value="F:metal ion binding"/>
    <property type="evidence" value="ECO:0007669"/>
    <property type="project" value="UniProtKB-KW"/>
</dbReference>
<dbReference type="GO" id="GO:0016491">
    <property type="term" value="F:oxidoreductase activity"/>
    <property type="evidence" value="ECO:0007669"/>
    <property type="project" value="UniProtKB-KW"/>
</dbReference>
<dbReference type="GO" id="GO:0019430">
    <property type="term" value="P:removal of superoxide radicals"/>
    <property type="evidence" value="ECO:0000315"/>
    <property type="project" value="EcoCyc"/>
</dbReference>
<dbReference type="GO" id="GO:0022904">
    <property type="term" value="P:respiratory electron transport chain"/>
    <property type="evidence" value="ECO:0007669"/>
    <property type="project" value="InterPro"/>
</dbReference>
<dbReference type="InterPro" id="IPR011577">
    <property type="entry name" value="Cyt_b561_bac/Ni-Hgenase"/>
</dbReference>
<dbReference type="InterPro" id="IPR052168">
    <property type="entry name" value="Cytochrome_b561_oxidase"/>
</dbReference>
<dbReference type="InterPro" id="IPR016174">
    <property type="entry name" value="Di-haem_cyt_TM"/>
</dbReference>
<dbReference type="NCBIfam" id="NF008566">
    <property type="entry name" value="PRK11513.1"/>
    <property type="match status" value="1"/>
</dbReference>
<dbReference type="PANTHER" id="PTHR30529">
    <property type="entry name" value="CYTOCHROME B561"/>
    <property type="match status" value="1"/>
</dbReference>
<dbReference type="PANTHER" id="PTHR30529:SF4">
    <property type="entry name" value="SUPEROXIDE OXIDASE CYBB"/>
    <property type="match status" value="1"/>
</dbReference>
<dbReference type="Pfam" id="PF01292">
    <property type="entry name" value="Ni_hydr_CYTB"/>
    <property type="match status" value="1"/>
</dbReference>
<dbReference type="SUPFAM" id="SSF81342">
    <property type="entry name" value="Transmembrane di-heme cytochromes"/>
    <property type="match status" value="1"/>
</dbReference>
<organism>
    <name type="scientific">Escherichia coli (strain K12)</name>
    <dbReference type="NCBI Taxonomy" id="83333"/>
    <lineage>
        <taxon>Bacteria</taxon>
        <taxon>Pseudomonadati</taxon>
        <taxon>Pseudomonadota</taxon>
        <taxon>Gammaproteobacteria</taxon>
        <taxon>Enterobacterales</taxon>
        <taxon>Enterobacteriaceae</taxon>
        <taxon>Escherichia</taxon>
    </lineage>
</organism>
<evidence type="ECO:0000269" key="1">
    <source>
    </source>
</evidence>
<evidence type="ECO:0000269" key="2">
    <source>
    </source>
</evidence>
<evidence type="ECO:0000269" key="3">
    <source>
    </source>
</evidence>
<evidence type="ECO:0000269" key="4">
    <source>
    </source>
</evidence>
<evidence type="ECO:0000269" key="5">
    <source>
    </source>
</evidence>
<evidence type="ECO:0000303" key="6">
    <source>
    </source>
</evidence>
<evidence type="ECO:0000303" key="7">
    <source>
    </source>
</evidence>
<evidence type="ECO:0000305" key="8"/>
<evidence type="ECO:0000305" key="9">
    <source>
    </source>
</evidence>
<evidence type="ECO:0007744" key="10">
    <source>
        <dbReference type="PDB" id="5OC0"/>
    </source>
</evidence>
<evidence type="ECO:0007829" key="11">
    <source>
        <dbReference type="PDB" id="5OC0"/>
    </source>
</evidence>
<gene>
    <name evidence="7" type="primary">cybB</name>
    <name type="ordered locus">b1418</name>
    <name type="ordered locus">JW5224</name>
</gene>
<sequence>MENKYSRLQISIHWLVFLLVIAAYCAMEFRGFFPRSDRPLINMIHVSCGISILVLMVVRLLLRLKYPTPPIIPKPKPMMTGLAHLGHLVIYLLFIALPVIGLVMMYNRGNPWFAFGLTMPYASEANFERVDSLKSWHETLANLGYFVIGLHAAAALAHHYFWKDNTLLRMMPRKRS</sequence>
<name>C561_ECOLI</name>
<keyword id="KW-0002">3D-structure</keyword>
<keyword id="KW-0997">Cell inner membrane</keyword>
<keyword id="KW-1003">Cell membrane</keyword>
<keyword id="KW-0249">Electron transport</keyword>
<keyword id="KW-0349">Heme</keyword>
<keyword id="KW-0408">Iron</keyword>
<keyword id="KW-0472">Membrane</keyword>
<keyword id="KW-0479">Metal-binding</keyword>
<keyword id="KW-0560">Oxidoreductase</keyword>
<keyword id="KW-1185">Reference proteome</keyword>
<keyword id="KW-0812">Transmembrane</keyword>
<keyword id="KW-1133">Transmembrane helix</keyword>
<keyword id="KW-0813">Transport</keyword>
<accession>P0ABE5</accession>
<accession>P08732</accession>
<accession>P76095</accession>